<proteinExistence type="inferred from homology"/>
<evidence type="ECO:0000255" key="1">
    <source>
        <dbReference type="HAMAP-Rule" id="MF_01246"/>
    </source>
</evidence>
<organism>
    <name type="scientific">Proteus mirabilis (strain HI4320)</name>
    <dbReference type="NCBI Taxonomy" id="529507"/>
    <lineage>
        <taxon>Bacteria</taxon>
        <taxon>Pseudomonadati</taxon>
        <taxon>Pseudomonadota</taxon>
        <taxon>Gammaproteobacteria</taxon>
        <taxon>Enterobacterales</taxon>
        <taxon>Morganellaceae</taxon>
        <taxon>Proteus</taxon>
    </lineage>
</organism>
<dbReference type="EC" id="3.5.1.105" evidence="1"/>
<dbReference type="EMBL" id="AM942759">
    <property type="protein sequence ID" value="CAR45808.1"/>
    <property type="molecule type" value="Genomic_DNA"/>
</dbReference>
<dbReference type="RefSeq" id="WP_012368562.1">
    <property type="nucleotide sequence ID" value="NC_010554.1"/>
</dbReference>
<dbReference type="SMR" id="B4EZQ3"/>
<dbReference type="EnsemblBacteria" id="CAR45808">
    <property type="protein sequence ID" value="CAR45808"/>
    <property type="gene ID" value="PMI2951"/>
</dbReference>
<dbReference type="GeneID" id="6803106"/>
<dbReference type="KEGG" id="pmr:PMI2951"/>
<dbReference type="PATRIC" id="fig|529507.6.peg.2882"/>
<dbReference type="eggNOG" id="COG3394">
    <property type="taxonomic scope" value="Bacteria"/>
</dbReference>
<dbReference type="HOGENOM" id="CLU_064244_4_1_6"/>
<dbReference type="UniPathway" id="UPA00349"/>
<dbReference type="Proteomes" id="UP000008319">
    <property type="component" value="Chromosome"/>
</dbReference>
<dbReference type="GO" id="GO:0005737">
    <property type="term" value="C:cytoplasm"/>
    <property type="evidence" value="ECO:0007669"/>
    <property type="project" value="UniProtKB-SubCell"/>
</dbReference>
<dbReference type="GO" id="GO:0036311">
    <property type="term" value="F:chitin disaccharide deacetylase activity"/>
    <property type="evidence" value="ECO:0007669"/>
    <property type="project" value="UniProtKB-UniRule"/>
</dbReference>
<dbReference type="GO" id="GO:0019213">
    <property type="term" value="F:deacetylase activity"/>
    <property type="evidence" value="ECO:0007669"/>
    <property type="project" value="TreeGrafter"/>
</dbReference>
<dbReference type="GO" id="GO:0046872">
    <property type="term" value="F:metal ion binding"/>
    <property type="evidence" value="ECO:0007669"/>
    <property type="project" value="UniProtKB-KW"/>
</dbReference>
<dbReference type="GO" id="GO:0006032">
    <property type="term" value="P:chitin catabolic process"/>
    <property type="evidence" value="ECO:0007669"/>
    <property type="project" value="UniProtKB-UniPathway"/>
</dbReference>
<dbReference type="GO" id="GO:0052777">
    <property type="term" value="P:diacetylchitobiose catabolic process"/>
    <property type="evidence" value="ECO:0007669"/>
    <property type="project" value="UniProtKB-UniRule"/>
</dbReference>
<dbReference type="GO" id="GO:0000272">
    <property type="term" value="P:polysaccharide catabolic process"/>
    <property type="evidence" value="ECO:0007669"/>
    <property type="project" value="UniProtKB-UniRule"/>
</dbReference>
<dbReference type="CDD" id="cd10803">
    <property type="entry name" value="YdjC_EF3048_like"/>
    <property type="match status" value="1"/>
</dbReference>
<dbReference type="Gene3D" id="3.20.20.370">
    <property type="entry name" value="Glycoside hydrolase/deacetylase"/>
    <property type="match status" value="1"/>
</dbReference>
<dbReference type="HAMAP" id="MF_01246">
    <property type="entry name" value="COD"/>
    <property type="match status" value="1"/>
</dbReference>
<dbReference type="InterPro" id="IPR022948">
    <property type="entry name" value="COD_ChbG_bac"/>
</dbReference>
<dbReference type="InterPro" id="IPR011330">
    <property type="entry name" value="Glyco_hydro/deAcase_b/a-brl"/>
</dbReference>
<dbReference type="InterPro" id="IPR006879">
    <property type="entry name" value="YdjC-like"/>
</dbReference>
<dbReference type="NCBIfam" id="NF002559">
    <property type="entry name" value="PRK02134.1"/>
    <property type="match status" value="1"/>
</dbReference>
<dbReference type="PANTHER" id="PTHR31609:SF1">
    <property type="entry name" value="CARBOHYDRATE DEACETYLASE"/>
    <property type="match status" value="1"/>
</dbReference>
<dbReference type="PANTHER" id="PTHR31609">
    <property type="entry name" value="YDJC DEACETYLASE FAMILY MEMBER"/>
    <property type="match status" value="1"/>
</dbReference>
<dbReference type="Pfam" id="PF04794">
    <property type="entry name" value="YdjC"/>
    <property type="match status" value="1"/>
</dbReference>
<dbReference type="SUPFAM" id="SSF88713">
    <property type="entry name" value="Glycoside hydrolase/deacetylase"/>
    <property type="match status" value="1"/>
</dbReference>
<gene>
    <name evidence="1" type="primary">chbG</name>
    <name type="ordered locus">PMI2951</name>
</gene>
<keyword id="KW-0119">Carbohydrate metabolism</keyword>
<keyword id="KW-0146">Chitin degradation</keyword>
<keyword id="KW-0963">Cytoplasm</keyword>
<keyword id="KW-0378">Hydrolase</keyword>
<keyword id="KW-0460">Magnesium</keyword>
<keyword id="KW-0479">Metal-binding</keyword>
<keyword id="KW-0624">Polysaccharide degradation</keyword>
<keyword id="KW-1185">Reference proteome</keyword>
<sequence length="253" mass="28413">MAHLLIVNADDFGLSRGQNYGIVECHRHGIVTSTTALVNAEGIEHAAQLCKELPHLGVGLHFTLTMGQPLSPIPSLTRNGVLGKWLWQMAEQEQLPLDEIRVELNAQYQRFVELFGCPPDHIDSHHHVHMFKQIFPIVAEFAQQKALPIRVDRLLAQKENLNTQGVISSDGFDSQFYGDEISQALFLKTLDDAKARGEQSLEVMTHPAFIDNPLRVSGYCFQRLTELEVLTQSSLKQAIAERGYQLGTYQDLI</sequence>
<accession>B4EZQ3</accession>
<reference key="1">
    <citation type="journal article" date="2008" name="J. Bacteriol.">
        <title>Complete genome sequence of uropathogenic Proteus mirabilis, a master of both adherence and motility.</title>
        <authorList>
            <person name="Pearson M.M."/>
            <person name="Sebaihia M."/>
            <person name="Churcher C."/>
            <person name="Quail M.A."/>
            <person name="Seshasayee A.S."/>
            <person name="Luscombe N.M."/>
            <person name="Abdellah Z."/>
            <person name="Arrosmith C."/>
            <person name="Atkin B."/>
            <person name="Chillingworth T."/>
            <person name="Hauser H."/>
            <person name="Jagels K."/>
            <person name="Moule S."/>
            <person name="Mungall K."/>
            <person name="Norbertczak H."/>
            <person name="Rabbinowitsch E."/>
            <person name="Walker D."/>
            <person name="Whithead S."/>
            <person name="Thomson N.R."/>
            <person name="Rather P.N."/>
            <person name="Parkhill J."/>
            <person name="Mobley H.L.T."/>
        </authorList>
    </citation>
    <scope>NUCLEOTIDE SEQUENCE [LARGE SCALE GENOMIC DNA]</scope>
    <source>
        <strain>HI4320</strain>
    </source>
</reference>
<feature type="chain" id="PRO_1000139829" description="Chitooligosaccharide deacetylase">
    <location>
        <begin position="1"/>
        <end position="253"/>
    </location>
</feature>
<feature type="binding site" evidence="1">
    <location>
        <position position="61"/>
    </location>
    <ligand>
        <name>Mg(2+)</name>
        <dbReference type="ChEBI" id="CHEBI:18420"/>
    </ligand>
</feature>
<feature type="binding site" evidence="1">
    <location>
        <position position="125"/>
    </location>
    <ligand>
        <name>Mg(2+)</name>
        <dbReference type="ChEBI" id="CHEBI:18420"/>
    </ligand>
</feature>
<name>CHBG_PROMH</name>
<protein>
    <recommendedName>
        <fullName evidence="1">Chitooligosaccharide deacetylase</fullName>
        <shortName evidence="1">COD</shortName>
        <ecNumber evidence="1">3.5.1.105</ecNumber>
    </recommendedName>
    <alternativeName>
        <fullName evidence="1">Chitin disaccharide deacetylase</fullName>
    </alternativeName>
    <alternativeName>
        <fullName evidence="1">Chitobiose deacetylase</fullName>
    </alternativeName>
    <alternativeName>
        <fullName evidence="1">Chitobiose-6P deacetylase</fullName>
    </alternativeName>
    <alternativeName>
        <fullName evidence="1">Chitotriose deacetylase</fullName>
    </alternativeName>
    <alternativeName>
        <fullName evidence="1">Chitotriose-6P deacetylase</fullName>
    </alternativeName>
</protein>
<comment type="function">
    <text evidence="1">Involved in the degradation of chitin. ChbG is essential for growth on the acetylated chitooligosaccharides chitobiose and chitotriose but is dispensable for growth on cellobiose and chitosan dimer, the deacetylated form of chitobiose. Deacetylation of chitobiose-6-P and chitotriose-6-P is necessary for both the activation of the chb promoter by the regulatory protein ChbR and the hydrolysis of phosphorylated beta-glucosides by the phospho-beta-glucosidase ChbF. Catalyzes the removal of only one acetyl group from chitobiose-6-P to yield monoacetylchitobiose-6-P, the inducer of ChbR and the substrate of ChbF.</text>
</comment>
<comment type="catalytic activity">
    <reaction evidence="1">
        <text>N,N'-diacetylchitobiose + H2O = N-acetyl-beta-D-glucosaminyl-(1-&gt;4)-D-glucosamine + acetate</text>
        <dbReference type="Rhea" id="RHEA:27469"/>
        <dbReference type="ChEBI" id="CHEBI:15377"/>
        <dbReference type="ChEBI" id="CHEBI:28681"/>
        <dbReference type="ChEBI" id="CHEBI:30089"/>
        <dbReference type="ChEBI" id="CHEBI:59910"/>
        <dbReference type="EC" id="3.5.1.105"/>
    </reaction>
</comment>
<comment type="catalytic activity">
    <reaction evidence="1">
        <text>diacetylchitobiose-6'-phosphate + H2O = N'-monoacetylchitobiose-6'-phosphate + acetate</text>
        <dbReference type="Rhea" id="RHEA:35083"/>
        <dbReference type="ChEBI" id="CHEBI:15377"/>
        <dbReference type="ChEBI" id="CHEBI:30089"/>
        <dbReference type="ChEBI" id="CHEBI:64883"/>
        <dbReference type="ChEBI" id="CHEBI:71315"/>
    </reaction>
</comment>
<comment type="cofactor">
    <cofactor evidence="1">
        <name>Mg(2+)</name>
        <dbReference type="ChEBI" id="CHEBI:18420"/>
    </cofactor>
</comment>
<comment type="pathway">
    <text evidence="1">Glycan degradation; chitin degradation.</text>
</comment>
<comment type="subunit">
    <text evidence="1">Homodimer.</text>
</comment>
<comment type="subcellular location">
    <subcellularLocation>
        <location evidence="1">Cytoplasm</location>
    </subcellularLocation>
</comment>
<comment type="similarity">
    <text evidence="1">Belongs to the YdjC deacetylase family. ChbG subfamily.</text>
</comment>